<gene>
    <name evidence="1" type="primary">rplQ</name>
    <name type="ordered locus">FN1282</name>
</gene>
<dbReference type="EMBL" id="AE009951">
    <property type="protein sequence ID" value="AAL95478.1"/>
    <property type="molecule type" value="Genomic_DNA"/>
</dbReference>
<dbReference type="RefSeq" id="NP_604179.1">
    <property type="nucleotide sequence ID" value="NC_003454.1"/>
</dbReference>
<dbReference type="RefSeq" id="WP_005903918.1">
    <property type="nucleotide sequence ID" value="NZ_OZ209243.1"/>
</dbReference>
<dbReference type="SMR" id="Q8RE45"/>
<dbReference type="FunCoup" id="Q8RE45">
    <property type="interactions" value="359"/>
</dbReference>
<dbReference type="STRING" id="190304.FN1282"/>
<dbReference type="PaxDb" id="190304-FN1282"/>
<dbReference type="EnsemblBacteria" id="AAL95478">
    <property type="protein sequence ID" value="AAL95478"/>
    <property type="gene ID" value="FN1282"/>
</dbReference>
<dbReference type="GeneID" id="79784258"/>
<dbReference type="KEGG" id="fnu:FN1282"/>
<dbReference type="PATRIC" id="fig|190304.8.peg.1847"/>
<dbReference type="eggNOG" id="COG0203">
    <property type="taxonomic scope" value="Bacteria"/>
</dbReference>
<dbReference type="HOGENOM" id="CLU_074407_2_2_0"/>
<dbReference type="InParanoid" id="Q8RE45"/>
<dbReference type="BioCyc" id="FNUC190304:G1FZS-1858-MONOMER"/>
<dbReference type="Proteomes" id="UP000002521">
    <property type="component" value="Chromosome"/>
</dbReference>
<dbReference type="GO" id="GO:0022625">
    <property type="term" value="C:cytosolic large ribosomal subunit"/>
    <property type="evidence" value="ECO:0000318"/>
    <property type="project" value="GO_Central"/>
</dbReference>
<dbReference type="GO" id="GO:0003735">
    <property type="term" value="F:structural constituent of ribosome"/>
    <property type="evidence" value="ECO:0000318"/>
    <property type="project" value="GO_Central"/>
</dbReference>
<dbReference type="GO" id="GO:0006412">
    <property type="term" value="P:translation"/>
    <property type="evidence" value="ECO:0007669"/>
    <property type="project" value="UniProtKB-UniRule"/>
</dbReference>
<dbReference type="FunFam" id="3.90.1030.10:FF:000001">
    <property type="entry name" value="50S ribosomal protein L17"/>
    <property type="match status" value="1"/>
</dbReference>
<dbReference type="Gene3D" id="3.90.1030.10">
    <property type="entry name" value="Ribosomal protein L17"/>
    <property type="match status" value="1"/>
</dbReference>
<dbReference type="HAMAP" id="MF_01368">
    <property type="entry name" value="Ribosomal_bL17"/>
    <property type="match status" value="1"/>
</dbReference>
<dbReference type="InterPro" id="IPR000456">
    <property type="entry name" value="Ribosomal_bL17"/>
</dbReference>
<dbReference type="InterPro" id="IPR047859">
    <property type="entry name" value="Ribosomal_bL17_CS"/>
</dbReference>
<dbReference type="InterPro" id="IPR036373">
    <property type="entry name" value="Ribosomal_bL17_sf"/>
</dbReference>
<dbReference type="NCBIfam" id="TIGR00059">
    <property type="entry name" value="L17"/>
    <property type="match status" value="1"/>
</dbReference>
<dbReference type="PANTHER" id="PTHR14413:SF16">
    <property type="entry name" value="LARGE RIBOSOMAL SUBUNIT PROTEIN BL17M"/>
    <property type="match status" value="1"/>
</dbReference>
<dbReference type="PANTHER" id="PTHR14413">
    <property type="entry name" value="RIBOSOMAL PROTEIN L17"/>
    <property type="match status" value="1"/>
</dbReference>
<dbReference type="Pfam" id="PF01196">
    <property type="entry name" value="Ribosomal_L17"/>
    <property type="match status" value="1"/>
</dbReference>
<dbReference type="SUPFAM" id="SSF64263">
    <property type="entry name" value="Prokaryotic ribosomal protein L17"/>
    <property type="match status" value="1"/>
</dbReference>
<dbReference type="PROSITE" id="PS01167">
    <property type="entry name" value="RIBOSOMAL_L17"/>
    <property type="match status" value="1"/>
</dbReference>
<protein>
    <recommendedName>
        <fullName evidence="1">Large ribosomal subunit protein bL17</fullName>
    </recommendedName>
    <alternativeName>
        <fullName evidence="2">50S ribosomal protein L17</fullName>
    </alternativeName>
</protein>
<proteinExistence type="inferred from homology"/>
<evidence type="ECO:0000255" key="1">
    <source>
        <dbReference type="HAMAP-Rule" id="MF_01368"/>
    </source>
</evidence>
<evidence type="ECO:0000305" key="2"/>
<name>RL17_FUSNN</name>
<organism>
    <name type="scientific">Fusobacterium nucleatum subsp. nucleatum (strain ATCC 25586 / DSM 15643 / BCRC 10681 / CIP 101130 / JCM 8532 / KCTC 2640 / LMG 13131 / VPI 4355)</name>
    <dbReference type="NCBI Taxonomy" id="190304"/>
    <lineage>
        <taxon>Bacteria</taxon>
        <taxon>Fusobacteriati</taxon>
        <taxon>Fusobacteriota</taxon>
        <taxon>Fusobacteriia</taxon>
        <taxon>Fusobacteriales</taxon>
        <taxon>Fusobacteriaceae</taxon>
        <taxon>Fusobacterium</taxon>
    </lineage>
</organism>
<sequence>MNHNKSYRKLGRRADHRKAMLKNMTISLIKAERIETTVTRAKELRKFAERMITFGKKNTLASRRNAFAFLRDEEVVAKIFNEIAPKYAERNGGYTRIIKTSVRKGDSAEMAIIELV</sequence>
<feature type="chain" id="PRO_0000267872" description="Large ribosomal subunit protein bL17">
    <location>
        <begin position="1"/>
        <end position="116"/>
    </location>
</feature>
<accession>Q8RE45</accession>
<keyword id="KW-1185">Reference proteome</keyword>
<keyword id="KW-0687">Ribonucleoprotein</keyword>
<keyword id="KW-0689">Ribosomal protein</keyword>
<reference key="1">
    <citation type="journal article" date="2002" name="J. Bacteriol.">
        <title>Genome sequence and analysis of the oral bacterium Fusobacterium nucleatum strain ATCC 25586.</title>
        <authorList>
            <person name="Kapatral V."/>
            <person name="Anderson I."/>
            <person name="Ivanova N."/>
            <person name="Reznik G."/>
            <person name="Los T."/>
            <person name="Lykidis A."/>
            <person name="Bhattacharyya A."/>
            <person name="Bartman A."/>
            <person name="Gardner W."/>
            <person name="Grechkin G."/>
            <person name="Zhu L."/>
            <person name="Vasieva O."/>
            <person name="Chu L."/>
            <person name="Kogan Y."/>
            <person name="Chaga O."/>
            <person name="Goltsman E."/>
            <person name="Bernal A."/>
            <person name="Larsen N."/>
            <person name="D'Souza M."/>
            <person name="Walunas T."/>
            <person name="Pusch G."/>
            <person name="Haselkorn R."/>
            <person name="Fonstein M."/>
            <person name="Kyrpides N.C."/>
            <person name="Overbeek R."/>
        </authorList>
    </citation>
    <scope>NUCLEOTIDE SEQUENCE [LARGE SCALE GENOMIC DNA]</scope>
    <source>
        <strain>ATCC 25586 / DSM 15643 / BCRC 10681 / CIP 101130 / JCM 8532 / KCTC 2640 / LMG 13131 / VPI 4355</strain>
    </source>
</reference>
<comment type="subunit">
    <text evidence="1">Part of the 50S ribosomal subunit. Contacts protein L32.</text>
</comment>
<comment type="similarity">
    <text evidence="1">Belongs to the bacterial ribosomal protein bL17 family.</text>
</comment>